<dbReference type="EMBL" id="M35636">
    <property type="protein sequence ID" value="AAC83402.1"/>
    <property type="molecule type" value="mRNA"/>
</dbReference>
<dbReference type="SMR" id="P12262"/>
<dbReference type="iPTMnet" id="P12262"/>
<dbReference type="GO" id="GO:0005829">
    <property type="term" value="C:cytosol"/>
    <property type="evidence" value="ECO:0007669"/>
    <property type="project" value="TreeGrafter"/>
</dbReference>
<dbReference type="GO" id="GO:0005853">
    <property type="term" value="C:eukaryotic translation elongation factor 1 complex"/>
    <property type="evidence" value="ECO:0007669"/>
    <property type="project" value="InterPro"/>
</dbReference>
<dbReference type="GO" id="GO:0005085">
    <property type="term" value="F:guanyl-nucleotide exchange factor activity"/>
    <property type="evidence" value="ECO:0007669"/>
    <property type="project" value="TreeGrafter"/>
</dbReference>
<dbReference type="GO" id="GO:0003746">
    <property type="term" value="F:translation elongation factor activity"/>
    <property type="evidence" value="ECO:0007669"/>
    <property type="project" value="UniProtKB-KW"/>
</dbReference>
<dbReference type="CDD" id="cd00292">
    <property type="entry name" value="EF1B"/>
    <property type="match status" value="1"/>
</dbReference>
<dbReference type="FunFam" id="3.30.70.60:FF:000001">
    <property type="entry name" value="Elongation factor 1-beta 1 like"/>
    <property type="match status" value="1"/>
</dbReference>
<dbReference type="Gene3D" id="1.20.1050.130">
    <property type="match status" value="1"/>
</dbReference>
<dbReference type="Gene3D" id="3.30.70.60">
    <property type="match status" value="1"/>
</dbReference>
<dbReference type="InterPro" id="IPR036219">
    <property type="entry name" value="eEF-1beta-like_sf"/>
</dbReference>
<dbReference type="InterPro" id="IPR018940">
    <property type="entry name" value="EF-1_beta_acid_region_euk"/>
</dbReference>
<dbReference type="InterPro" id="IPR049720">
    <property type="entry name" value="EF1B_bsu/dsu"/>
</dbReference>
<dbReference type="InterPro" id="IPR014038">
    <property type="entry name" value="EF1B_bsu/dsu_GNE"/>
</dbReference>
<dbReference type="InterPro" id="IPR036282">
    <property type="entry name" value="Glutathione-S-Trfase_C_sf"/>
</dbReference>
<dbReference type="InterPro" id="IPR014717">
    <property type="entry name" value="Transl_elong_EF1B/ribsomal_bS6"/>
</dbReference>
<dbReference type="InterPro" id="IPR001326">
    <property type="entry name" value="Transl_elong_EF1B_B/D_CS"/>
</dbReference>
<dbReference type="PANTHER" id="PTHR11595">
    <property type="entry name" value="EF-HAND AND COILED-COIL DOMAIN-CONTAINING FAMILY MEMBER"/>
    <property type="match status" value="1"/>
</dbReference>
<dbReference type="PANTHER" id="PTHR11595:SF21">
    <property type="entry name" value="ELONGATION FACTOR 1-BETA"/>
    <property type="match status" value="1"/>
</dbReference>
<dbReference type="Pfam" id="PF10587">
    <property type="entry name" value="EF-1_beta_acid"/>
    <property type="match status" value="1"/>
</dbReference>
<dbReference type="Pfam" id="PF00736">
    <property type="entry name" value="EF1_GNE"/>
    <property type="match status" value="1"/>
</dbReference>
<dbReference type="SMART" id="SM01182">
    <property type="entry name" value="EF-1_beta_acid"/>
    <property type="match status" value="1"/>
</dbReference>
<dbReference type="SMART" id="SM00888">
    <property type="entry name" value="EF1_GNE"/>
    <property type="match status" value="1"/>
</dbReference>
<dbReference type="SUPFAM" id="SSF54984">
    <property type="entry name" value="eEF-1beta-like"/>
    <property type="match status" value="1"/>
</dbReference>
<dbReference type="SUPFAM" id="SSF47616">
    <property type="entry name" value="GST C-terminal domain-like"/>
    <property type="match status" value="1"/>
</dbReference>
<dbReference type="PROSITE" id="PS00824">
    <property type="entry name" value="EF1BD_1"/>
    <property type="match status" value="1"/>
</dbReference>
<dbReference type="PROSITE" id="PS00825">
    <property type="entry name" value="EF1BD_2"/>
    <property type="match status" value="1"/>
</dbReference>
<sequence length="207" mass="23324">MANIDLKAEKGQEQLNELLANKSYLQGYEPSQEDVAAFNQLNKAPSDKFPYLLRWYKHISSFSDAEKKGFPGIPTSASKEEDDDVDLFGSDEEDEEAEKIKAERMKAYSDKKSKKPAIVAKSSVILDIKPWDDETDMAEMEKLVRSVQMDGLVWGAAKLIPLAYGIKKLSIMCVVEDDKVSIDELQEKISEFEDFVQSVDIAAFNKV</sequence>
<protein>
    <recommendedName>
        <fullName>Elongation factor 1-beta</fullName>
        <shortName>EF-1-beta</shortName>
    </recommendedName>
</protein>
<keyword id="KW-0007">Acetylation</keyword>
<keyword id="KW-0903">Direct protein sequencing</keyword>
<keyword id="KW-0251">Elongation factor</keyword>
<keyword id="KW-0597">Phosphoprotein</keyword>
<keyword id="KW-0648">Protein biosynthesis</keyword>
<feature type="initiator methionine" description="Removed" evidence="3">
    <location>
        <position position="1"/>
    </location>
</feature>
<feature type="chain" id="PRO_0000155028" description="Elongation factor 1-beta">
    <location>
        <begin position="2"/>
        <end position="207"/>
    </location>
</feature>
<feature type="region of interest" description="Disordered" evidence="1">
    <location>
        <begin position="70"/>
        <end position="96"/>
    </location>
</feature>
<feature type="compositionally biased region" description="Acidic residues" evidence="1">
    <location>
        <begin position="80"/>
        <end position="96"/>
    </location>
</feature>
<feature type="modified residue" description="N-acetylalanine" evidence="3">
    <location>
        <position position="2"/>
    </location>
</feature>
<feature type="modified residue" description="Phosphoserine; by CK2" evidence="2">
    <location>
        <position position="90"/>
    </location>
</feature>
<reference key="1">
    <citation type="journal article" date="1986" name="FEBS Lett.">
        <title>Primary structure of elongation factor 1-beta from Artemia.</title>
        <authorList>
            <person name="Maessen G.D.F."/>
            <person name="Amons R."/>
            <person name="Maassen J.A."/>
            <person name="Moeller W."/>
        </authorList>
    </citation>
    <scope>NUCLEOTIDE SEQUENCE [MRNA]</scope>
    <scope>CLEAVAGE OF INITIATOR METHIONINE</scope>
    <scope>ACETYLATION AT ALA-2</scope>
    <scope>PARTIAL PROTEIN SEQUENCE</scope>
</reference>
<reference key="2">
    <citation type="journal article" date="1990" name="Biochim. Biophys. Acta">
        <title>Elongation factor 1 beta of artemia: localization of functional sites and homology to elongation factor 1 delta.</title>
        <authorList>
            <person name="van Damme H.T.F."/>
            <person name="Amons R."/>
            <person name="Karssies R."/>
            <person name="Timmers C.J."/>
            <person name="Janssen G.M.C."/>
            <person name="Moeller W."/>
        </authorList>
    </citation>
    <scope>PARTIAL PROTEIN SEQUENCE</scope>
</reference>
<reference key="3">
    <citation type="journal article" date="1988" name="J. Biol. Chem.">
        <title>Phosphorylation of elongation factor 1 beta by an endogenous kinase affects its catalytic nucleotide exchange activity.</title>
        <authorList>
            <person name="Janssen G.M.C."/>
            <person name="Maessen G.D.F."/>
            <person name="Amons R."/>
            <person name="Moeller W."/>
        </authorList>
    </citation>
    <scope>PHOSPHORYLATION AT SER-90</scope>
</reference>
<comment type="function">
    <text>EF-1-beta and EF-1-delta stimulate the exchange of GDP bound to EF-1-alpha to GTP.</text>
</comment>
<comment type="subunit">
    <text>EF-1 is composed of 4 subunits: alpha, beta, delta, and gamma.</text>
</comment>
<comment type="PTM">
    <text evidence="2">Phosphorylation affects the GDP/GTP exchange rate.</text>
</comment>
<comment type="similarity">
    <text evidence="4">Belongs to the EF-1-beta/EF-1-delta family.</text>
</comment>
<evidence type="ECO:0000256" key="1">
    <source>
        <dbReference type="SAM" id="MobiDB-lite"/>
    </source>
</evidence>
<evidence type="ECO:0000269" key="2">
    <source>
    </source>
</evidence>
<evidence type="ECO:0000269" key="3">
    <source ref="1"/>
</evidence>
<evidence type="ECO:0000305" key="4"/>
<proteinExistence type="evidence at protein level"/>
<organism>
    <name type="scientific">Artemia salina</name>
    <name type="common">Brine shrimp</name>
    <dbReference type="NCBI Taxonomy" id="85549"/>
    <lineage>
        <taxon>Eukaryota</taxon>
        <taxon>Metazoa</taxon>
        <taxon>Ecdysozoa</taxon>
        <taxon>Arthropoda</taxon>
        <taxon>Crustacea</taxon>
        <taxon>Branchiopoda</taxon>
        <taxon>Anostraca</taxon>
        <taxon>Artemiidae</taxon>
        <taxon>Artemia</taxon>
    </lineage>
</organism>
<name>EF1B_ARTSA</name>
<accession>P12262</accession>